<gene>
    <name evidence="1" type="primary">truB</name>
    <name type="ordered locus">APL_0641</name>
</gene>
<dbReference type="EC" id="5.4.99.25" evidence="1"/>
<dbReference type="EMBL" id="CP000569">
    <property type="protein sequence ID" value="ABN73743.1"/>
    <property type="molecule type" value="Genomic_DNA"/>
</dbReference>
<dbReference type="RefSeq" id="WP_005607489.1">
    <property type="nucleotide sequence ID" value="NC_009053.1"/>
</dbReference>
<dbReference type="SMR" id="A3N007"/>
<dbReference type="STRING" id="416269.APL_0641"/>
<dbReference type="EnsemblBacteria" id="ABN73743">
    <property type="protein sequence ID" value="ABN73743"/>
    <property type="gene ID" value="APL_0641"/>
</dbReference>
<dbReference type="KEGG" id="apl:APL_0641"/>
<dbReference type="eggNOG" id="COG0130">
    <property type="taxonomic scope" value="Bacteria"/>
</dbReference>
<dbReference type="HOGENOM" id="CLU_032087_0_3_6"/>
<dbReference type="Proteomes" id="UP000001432">
    <property type="component" value="Chromosome"/>
</dbReference>
<dbReference type="GO" id="GO:0003723">
    <property type="term" value="F:RNA binding"/>
    <property type="evidence" value="ECO:0007669"/>
    <property type="project" value="InterPro"/>
</dbReference>
<dbReference type="GO" id="GO:0160148">
    <property type="term" value="F:tRNA pseudouridine(55) synthase activity"/>
    <property type="evidence" value="ECO:0007669"/>
    <property type="project" value="UniProtKB-EC"/>
</dbReference>
<dbReference type="GO" id="GO:1990481">
    <property type="term" value="P:mRNA pseudouridine synthesis"/>
    <property type="evidence" value="ECO:0007669"/>
    <property type="project" value="TreeGrafter"/>
</dbReference>
<dbReference type="GO" id="GO:0031119">
    <property type="term" value="P:tRNA pseudouridine synthesis"/>
    <property type="evidence" value="ECO:0007669"/>
    <property type="project" value="UniProtKB-UniRule"/>
</dbReference>
<dbReference type="CDD" id="cd02573">
    <property type="entry name" value="PseudoU_synth_EcTruB"/>
    <property type="match status" value="1"/>
</dbReference>
<dbReference type="CDD" id="cd21152">
    <property type="entry name" value="PUA_TruB_bacterial"/>
    <property type="match status" value="1"/>
</dbReference>
<dbReference type="FunFam" id="3.30.2350.10:FF:000003">
    <property type="entry name" value="tRNA pseudouridine synthase B"/>
    <property type="match status" value="1"/>
</dbReference>
<dbReference type="Gene3D" id="3.30.2350.10">
    <property type="entry name" value="Pseudouridine synthase"/>
    <property type="match status" value="1"/>
</dbReference>
<dbReference type="Gene3D" id="2.30.130.10">
    <property type="entry name" value="PUA domain"/>
    <property type="match status" value="1"/>
</dbReference>
<dbReference type="HAMAP" id="MF_01080">
    <property type="entry name" value="TruB_bact"/>
    <property type="match status" value="1"/>
</dbReference>
<dbReference type="InterPro" id="IPR020103">
    <property type="entry name" value="PsdUridine_synth_cat_dom_sf"/>
</dbReference>
<dbReference type="InterPro" id="IPR002501">
    <property type="entry name" value="PsdUridine_synth_N"/>
</dbReference>
<dbReference type="InterPro" id="IPR015947">
    <property type="entry name" value="PUA-like_sf"/>
</dbReference>
<dbReference type="InterPro" id="IPR036974">
    <property type="entry name" value="PUA_sf"/>
</dbReference>
<dbReference type="InterPro" id="IPR014780">
    <property type="entry name" value="tRNA_psdUridine_synth_TruB"/>
</dbReference>
<dbReference type="InterPro" id="IPR015240">
    <property type="entry name" value="tRNA_sdUridine_synth_fam1_C"/>
</dbReference>
<dbReference type="InterPro" id="IPR032819">
    <property type="entry name" value="TruB_C"/>
</dbReference>
<dbReference type="NCBIfam" id="TIGR00431">
    <property type="entry name" value="TruB"/>
    <property type="match status" value="1"/>
</dbReference>
<dbReference type="PANTHER" id="PTHR13767:SF2">
    <property type="entry name" value="PSEUDOURIDYLATE SYNTHASE TRUB1"/>
    <property type="match status" value="1"/>
</dbReference>
<dbReference type="PANTHER" id="PTHR13767">
    <property type="entry name" value="TRNA-PSEUDOURIDINE SYNTHASE"/>
    <property type="match status" value="1"/>
</dbReference>
<dbReference type="Pfam" id="PF09157">
    <property type="entry name" value="TruB-C_2"/>
    <property type="match status" value="1"/>
</dbReference>
<dbReference type="Pfam" id="PF16198">
    <property type="entry name" value="TruB_C_2"/>
    <property type="match status" value="1"/>
</dbReference>
<dbReference type="Pfam" id="PF01509">
    <property type="entry name" value="TruB_N"/>
    <property type="match status" value="1"/>
</dbReference>
<dbReference type="SUPFAM" id="SSF55120">
    <property type="entry name" value="Pseudouridine synthase"/>
    <property type="match status" value="1"/>
</dbReference>
<dbReference type="SUPFAM" id="SSF88697">
    <property type="entry name" value="PUA domain-like"/>
    <property type="match status" value="1"/>
</dbReference>
<accession>A3N007</accession>
<reference key="1">
    <citation type="journal article" date="2008" name="J. Bacteriol.">
        <title>The complete genome sequence of Actinobacillus pleuropneumoniae L20 (serotype 5b).</title>
        <authorList>
            <person name="Foote S.J."/>
            <person name="Bosse J.T."/>
            <person name="Bouevitch A.B."/>
            <person name="Langford P.R."/>
            <person name="Young N.M."/>
            <person name="Nash J.H.E."/>
        </authorList>
    </citation>
    <scope>NUCLEOTIDE SEQUENCE [LARGE SCALE GENOMIC DNA]</scope>
    <source>
        <strain>L20</strain>
    </source>
</reference>
<proteinExistence type="inferred from homology"/>
<evidence type="ECO:0000255" key="1">
    <source>
        <dbReference type="HAMAP-Rule" id="MF_01080"/>
    </source>
</evidence>
<comment type="function">
    <text evidence="1">Responsible for synthesis of pseudouridine from uracil-55 in the psi GC loop of transfer RNAs.</text>
</comment>
<comment type="catalytic activity">
    <reaction evidence="1">
        <text>uridine(55) in tRNA = pseudouridine(55) in tRNA</text>
        <dbReference type="Rhea" id="RHEA:42532"/>
        <dbReference type="Rhea" id="RHEA-COMP:10101"/>
        <dbReference type="Rhea" id="RHEA-COMP:10102"/>
        <dbReference type="ChEBI" id="CHEBI:65314"/>
        <dbReference type="ChEBI" id="CHEBI:65315"/>
        <dbReference type="EC" id="5.4.99.25"/>
    </reaction>
</comment>
<comment type="similarity">
    <text evidence="1">Belongs to the pseudouridine synthase TruB family. Type 1 subfamily.</text>
</comment>
<keyword id="KW-0413">Isomerase</keyword>
<keyword id="KW-1185">Reference proteome</keyword>
<keyword id="KW-0819">tRNA processing</keyword>
<organism>
    <name type="scientific">Actinobacillus pleuropneumoniae serotype 5b (strain L20)</name>
    <dbReference type="NCBI Taxonomy" id="416269"/>
    <lineage>
        <taxon>Bacteria</taxon>
        <taxon>Pseudomonadati</taxon>
        <taxon>Pseudomonadota</taxon>
        <taxon>Gammaproteobacteria</taxon>
        <taxon>Pasteurellales</taxon>
        <taxon>Pasteurellaceae</taxon>
        <taxon>Actinobacillus</taxon>
    </lineage>
</organism>
<feature type="chain" id="PRO_1000084541" description="tRNA pseudouridine synthase B">
    <location>
        <begin position="1"/>
        <end position="305"/>
    </location>
</feature>
<feature type="active site" description="Nucleophile" evidence="1">
    <location>
        <position position="48"/>
    </location>
</feature>
<name>TRUB_ACTP2</name>
<sequence length="305" mass="34089">MSRPRKKGRDVHGVFLLDKPQGMSSNDILQKVKRLFQANKAGHTGALDPLATGMLPICLGEATKFSQFLLDSDKRYQVTAKLGKRTDTSDAEGQVVETRAVNVGEAEIITALEQFRGDILQVPTMFSALKHNGKPLYEYARQGITVEREARPITIFELRFIEYAAPYLTLEVHCSKGTYIRTLVDDLGEVLGCGAHVTVLRRLAVANYPIEAMMSYADLQNLSENQPLEELDKYLLPLDTAVESLPKLNLTAEQTKAVGFGQRVKFENNDQIYGQVRLFSHNMQFLGVAEITTDNVIRPSRMVNI</sequence>
<protein>
    <recommendedName>
        <fullName evidence="1">tRNA pseudouridine synthase B</fullName>
        <ecNumber evidence="1">5.4.99.25</ecNumber>
    </recommendedName>
    <alternativeName>
        <fullName evidence="1">tRNA pseudouridine(55) synthase</fullName>
        <shortName evidence="1">Psi55 synthase</shortName>
    </alternativeName>
    <alternativeName>
        <fullName evidence="1">tRNA pseudouridylate synthase</fullName>
    </alternativeName>
    <alternativeName>
        <fullName evidence="1">tRNA-uridine isomerase</fullName>
    </alternativeName>
</protein>